<proteinExistence type="inferred from homology"/>
<comment type="function">
    <text evidence="3">Zn(2)-C6 fungal-type transcription factor; part of the gene cluster that mediates the biosynthesis fumihopaside A, a hopane-type glucoside that enhances the thermotolerance and UV resistance of N.fumigata.</text>
</comment>
<comment type="subcellular location">
    <subcellularLocation>
        <location evidence="1">Nucleus</location>
    </subcellularLocation>
</comment>
<sequence>MLDRSKMTSAIPDSNSSSSPRGHNQSERDSYNRKKRKGPRLAHRKSRTGCQRCRARRVKCDESRPVCRDCHRHGIPCVYDRPAEEGAIPPSTGIQSRPLEPSPSDPSNDAHMELRLLHHFTLFTSATMPGAHLKRIKDCWSIDVPRLAFSYKPLLHAVFAIAALHLSKVNPDEAGLPDIHCNFLEQALREHRLCIGGITTQTADAVCFTSILLQIDVFATLQSRHVVSYEQVSEWMRLVRGSVAVFDAAMEIVRHNTHPPNIWCIIDTFPMPLRTNSDAGSFSFLLPTVPDDEDDETALEAYRGAVAHINATWLAMEAKEHPQISCRRLMVFPLFVTAGFIDLLEKRRPRALVPCPHHYVTYGGSETLHTNTS</sequence>
<name>AFUMD_ASPFC</name>
<gene>
    <name evidence="4" type="primary">afumD</name>
    <name type="ORF">AFUB_071570</name>
</gene>
<dbReference type="EMBL" id="DS499598">
    <property type="protein sequence ID" value="EDP50817.1"/>
    <property type="molecule type" value="Genomic_DNA"/>
</dbReference>
<dbReference type="SMR" id="B0Y568"/>
<dbReference type="EnsemblFungi" id="EDP50817">
    <property type="protein sequence ID" value="EDP50817"/>
    <property type="gene ID" value="AFUB_071570"/>
</dbReference>
<dbReference type="VEuPathDB" id="FungiDB:AFUB_071570"/>
<dbReference type="HOGENOM" id="CLU_024934_6_0_1"/>
<dbReference type="OrthoDB" id="82533at5052"/>
<dbReference type="PhylomeDB" id="B0Y568"/>
<dbReference type="Proteomes" id="UP000001699">
    <property type="component" value="Unassembled WGS sequence"/>
</dbReference>
<dbReference type="GO" id="GO:0005634">
    <property type="term" value="C:nucleus"/>
    <property type="evidence" value="ECO:0007669"/>
    <property type="project" value="UniProtKB-SubCell"/>
</dbReference>
<dbReference type="GO" id="GO:0003677">
    <property type="term" value="F:DNA binding"/>
    <property type="evidence" value="ECO:0007669"/>
    <property type="project" value="UniProtKB-KW"/>
</dbReference>
<dbReference type="GO" id="GO:0000981">
    <property type="term" value="F:DNA-binding transcription factor activity, RNA polymerase II-specific"/>
    <property type="evidence" value="ECO:0007669"/>
    <property type="project" value="InterPro"/>
</dbReference>
<dbReference type="GO" id="GO:0008270">
    <property type="term" value="F:zinc ion binding"/>
    <property type="evidence" value="ECO:0007669"/>
    <property type="project" value="InterPro"/>
</dbReference>
<dbReference type="CDD" id="cd00067">
    <property type="entry name" value="GAL4"/>
    <property type="match status" value="1"/>
</dbReference>
<dbReference type="Gene3D" id="4.10.240.10">
    <property type="entry name" value="Zn(2)-C6 fungal-type DNA-binding domain"/>
    <property type="match status" value="1"/>
</dbReference>
<dbReference type="InterPro" id="IPR021858">
    <property type="entry name" value="Fun_TF"/>
</dbReference>
<dbReference type="InterPro" id="IPR036864">
    <property type="entry name" value="Zn2-C6_fun-type_DNA-bd_sf"/>
</dbReference>
<dbReference type="InterPro" id="IPR052400">
    <property type="entry name" value="Zn2-C6_fungal_TF"/>
</dbReference>
<dbReference type="InterPro" id="IPR001138">
    <property type="entry name" value="Zn2Cys6_DnaBD"/>
</dbReference>
<dbReference type="PANTHER" id="PTHR47657">
    <property type="entry name" value="STEROL REGULATORY ELEMENT-BINDING PROTEIN ECM22"/>
    <property type="match status" value="1"/>
</dbReference>
<dbReference type="PANTHER" id="PTHR47657:SF14">
    <property type="entry name" value="ZN(2)-C6 FUNGAL-TYPE DOMAIN-CONTAINING PROTEIN"/>
    <property type="match status" value="1"/>
</dbReference>
<dbReference type="Pfam" id="PF11951">
    <property type="entry name" value="Fungal_trans_2"/>
    <property type="match status" value="1"/>
</dbReference>
<dbReference type="Pfam" id="PF00172">
    <property type="entry name" value="Zn_clus"/>
    <property type="match status" value="1"/>
</dbReference>
<dbReference type="SMART" id="SM00066">
    <property type="entry name" value="GAL4"/>
    <property type="match status" value="1"/>
</dbReference>
<dbReference type="SUPFAM" id="SSF57701">
    <property type="entry name" value="Zn2/Cys6 DNA-binding domain"/>
    <property type="match status" value="1"/>
</dbReference>
<dbReference type="PROSITE" id="PS00463">
    <property type="entry name" value="ZN2_CY6_FUNGAL_1"/>
    <property type="match status" value="1"/>
</dbReference>
<dbReference type="PROSITE" id="PS50048">
    <property type="entry name" value="ZN2_CY6_FUNGAL_2"/>
    <property type="match status" value="1"/>
</dbReference>
<protein>
    <recommendedName>
        <fullName evidence="4">Zn(2)-C6 fungal-type transcription factor afumD</fullName>
    </recommendedName>
    <alternativeName>
        <fullName evidence="4">Fumihopaside A biosynthesis cluster protein D</fullName>
    </alternativeName>
</protein>
<evidence type="ECO:0000255" key="1">
    <source>
        <dbReference type="PROSITE-ProRule" id="PRU00227"/>
    </source>
</evidence>
<evidence type="ECO:0000256" key="2">
    <source>
        <dbReference type="SAM" id="MobiDB-lite"/>
    </source>
</evidence>
<evidence type="ECO:0000269" key="3">
    <source>
    </source>
</evidence>
<evidence type="ECO:0000303" key="4">
    <source>
    </source>
</evidence>
<organism>
    <name type="scientific">Aspergillus fumigatus (strain CBS 144.89 / FGSC A1163 / CEA10)</name>
    <name type="common">Neosartorya fumigata</name>
    <dbReference type="NCBI Taxonomy" id="451804"/>
    <lineage>
        <taxon>Eukaryota</taxon>
        <taxon>Fungi</taxon>
        <taxon>Dikarya</taxon>
        <taxon>Ascomycota</taxon>
        <taxon>Pezizomycotina</taxon>
        <taxon>Eurotiomycetes</taxon>
        <taxon>Eurotiomycetidae</taxon>
        <taxon>Eurotiales</taxon>
        <taxon>Aspergillaceae</taxon>
        <taxon>Aspergillus</taxon>
        <taxon>Aspergillus subgen. Fumigati</taxon>
    </lineage>
</organism>
<feature type="chain" id="PRO_0000452741" description="Zn(2)-C6 fungal-type transcription factor afumD">
    <location>
        <begin position="1"/>
        <end position="373"/>
    </location>
</feature>
<feature type="DNA-binding region" description="Zn(2)-C6 fungal-type" evidence="1">
    <location>
        <begin position="50"/>
        <end position="77"/>
    </location>
</feature>
<feature type="region of interest" description="Disordered" evidence="2">
    <location>
        <begin position="1"/>
        <end position="48"/>
    </location>
</feature>
<feature type="region of interest" description="Disordered" evidence="2">
    <location>
        <begin position="86"/>
        <end position="110"/>
    </location>
</feature>
<feature type="compositionally biased region" description="Basic residues" evidence="2">
    <location>
        <begin position="33"/>
        <end position="48"/>
    </location>
</feature>
<accession>B0Y568</accession>
<reference key="1">
    <citation type="journal article" date="2008" name="PLoS Genet.">
        <title>Genomic islands in the pathogenic filamentous fungus Aspergillus fumigatus.</title>
        <authorList>
            <person name="Fedorova N.D."/>
            <person name="Khaldi N."/>
            <person name="Joardar V.S."/>
            <person name="Maiti R."/>
            <person name="Amedeo P."/>
            <person name="Anderson M.J."/>
            <person name="Crabtree J."/>
            <person name="Silva J.C."/>
            <person name="Badger J.H."/>
            <person name="Albarraq A."/>
            <person name="Angiuoli S."/>
            <person name="Bussey H."/>
            <person name="Bowyer P."/>
            <person name="Cotty P.J."/>
            <person name="Dyer P.S."/>
            <person name="Egan A."/>
            <person name="Galens K."/>
            <person name="Fraser-Liggett C.M."/>
            <person name="Haas B.J."/>
            <person name="Inman J.M."/>
            <person name="Kent R."/>
            <person name="Lemieux S."/>
            <person name="Malavazi I."/>
            <person name="Orvis J."/>
            <person name="Roemer T."/>
            <person name="Ronning C.M."/>
            <person name="Sundaram J.P."/>
            <person name="Sutton G."/>
            <person name="Turner G."/>
            <person name="Venter J.C."/>
            <person name="White O.R."/>
            <person name="Whitty B.R."/>
            <person name="Youngman P."/>
            <person name="Wolfe K.H."/>
            <person name="Goldman G.H."/>
            <person name="Wortman J.R."/>
            <person name="Jiang B."/>
            <person name="Denning D.W."/>
            <person name="Nierman W.C."/>
        </authorList>
    </citation>
    <scope>NUCLEOTIDE SEQUENCE [LARGE SCALE GENOMIC DNA]</scope>
    <source>
        <strain>CBS 144.89 / FGSC A1163 / CEA10</strain>
    </source>
</reference>
<reference key="2">
    <citation type="journal article" date="2019" name="Org. Lett.">
        <title>Characterization and Biosynthesis of a Rare Fungal Hopane-Type Triterpenoid Glycoside Involved in the Antistress Property of Aspergillus fumigatus.</title>
        <authorList>
            <person name="Ma K."/>
            <person name="Zhang P."/>
            <person name="Tao Q."/>
            <person name="Keller N.P."/>
            <person name="Yang Y."/>
            <person name="Yin W.B."/>
            <person name="Liu H."/>
        </authorList>
    </citation>
    <scope>FUNCTION</scope>
</reference>
<keyword id="KW-0238">DNA-binding</keyword>
<keyword id="KW-0479">Metal-binding</keyword>
<keyword id="KW-0539">Nucleus</keyword>
<keyword id="KW-0804">Transcription</keyword>
<keyword id="KW-0805">Transcription regulation</keyword>